<protein>
    <recommendedName>
        <fullName evidence="1">Ribosome-recycling factor</fullName>
        <shortName evidence="1">RRF</shortName>
    </recommendedName>
    <alternativeName>
        <fullName evidence="1">Ribosome-releasing factor</fullName>
    </alternativeName>
</protein>
<keyword id="KW-0963">Cytoplasm</keyword>
<keyword id="KW-0648">Protein biosynthesis</keyword>
<keyword id="KW-1185">Reference proteome</keyword>
<proteinExistence type="inferred from homology"/>
<sequence>MSNQELKTTMSKSIEAAQRNFNTIRTGRANTSLLDRISVEYYGAETPLKSLATITTPDSQTIAIQPFDLGSLASIEKAIATSDLGFTPNNDGKIIRINVPPLTEERRKEFCKLASKYAEEGKVALRNIRREAIDRVKKSEKDGDLSEDQSRDEQETIQKETDNFIKDIEKKLSEKEAEILKV</sequence>
<name>RRF_PROMT</name>
<feature type="chain" id="PRO_1000003227" description="Ribosome-recycling factor">
    <location>
        <begin position="1"/>
        <end position="182"/>
    </location>
</feature>
<feature type="region of interest" description="Disordered" evidence="2">
    <location>
        <begin position="136"/>
        <end position="160"/>
    </location>
</feature>
<dbReference type="EMBL" id="CP000095">
    <property type="protein sequence ID" value="AAZ59341.1"/>
    <property type="molecule type" value="Genomic_DNA"/>
</dbReference>
<dbReference type="RefSeq" id="WP_011294485.1">
    <property type="nucleotide sequence ID" value="NC_007335.2"/>
</dbReference>
<dbReference type="SMR" id="Q46GQ5"/>
<dbReference type="STRING" id="59920.PMN2A_1853"/>
<dbReference type="KEGG" id="pmn:PMN2A_1853"/>
<dbReference type="HOGENOM" id="CLU_073981_2_0_3"/>
<dbReference type="OrthoDB" id="9804006at2"/>
<dbReference type="PhylomeDB" id="Q46GQ5"/>
<dbReference type="Proteomes" id="UP000002535">
    <property type="component" value="Chromosome"/>
</dbReference>
<dbReference type="GO" id="GO:0005737">
    <property type="term" value="C:cytoplasm"/>
    <property type="evidence" value="ECO:0007669"/>
    <property type="project" value="UniProtKB-SubCell"/>
</dbReference>
<dbReference type="GO" id="GO:0043023">
    <property type="term" value="F:ribosomal large subunit binding"/>
    <property type="evidence" value="ECO:0007669"/>
    <property type="project" value="TreeGrafter"/>
</dbReference>
<dbReference type="GO" id="GO:0006415">
    <property type="term" value="P:translational termination"/>
    <property type="evidence" value="ECO:0007669"/>
    <property type="project" value="UniProtKB-UniRule"/>
</dbReference>
<dbReference type="CDD" id="cd00520">
    <property type="entry name" value="RRF"/>
    <property type="match status" value="1"/>
</dbReference>
<dbReference type="FunFam" id="1.10.132.20:FF:000001">
    <property type="entry name" value="Ribosome-recycling factor"/>
    <property type="match status" value="1"/>
</dbReference>
<dbReference type="FunFam" id="3.30.1360.40:FF:000001">
    <property type="entry name" value="Ribosome-recycling factor"/>
    <property type="match status" value="1"/>
</dbReference>
<dbReference type="Gene3D" id="3.30.1360.40">
    <property type="match status" value="1"/>
</dbReference>
<dbReference type="Gene3D" id="1.10.132.20">
    <property type="entry name" value="Ribosome-recycling factor"/>
    <property type="match status" value="1"/>
</dbReference>
<dbReference type="HAMAP" id="MF_00040">
    <property type="entry name" value="RRF"/>
    <property type="match status" value="1"/>
</dbReference>
<dbReference type="InterPro" id="IPR002661">
    <property type="entry name" value="Ribosome_recyc_fac"/>
</dbReference>
<dbReference type="InterPro" id="IPR023584">
    <property type="entry name" value="Ribosome_recyc_fac_dom"/>
</dbReference>
<dbReference type="InterPro" id="IPR036191">
    <property type="entry name" value="RRF_sf"/>
</dbReference>
<dbReference type="NCBIfam" id="TIGR00496">
    <property type="entry name" value="frr"/>
    <property type="match status" value="1"/>
</dbReference>
<dbReference type="PANTHER" id="PTHR20982:SF3">
    <property type="entry name" value="MITOCHONDRIAL RIBOSOME RECYCLING FACTOR PSEUDO 1"/>
    <property type="match status" value="1"/>
</dbReference>
<dbReference type="PANTHER" id="PTHR20982">
    <property type="entry name" value="RIBOSOME RECYCLING FACTOR"/>
    <property type="match status" value="1"/>
</dbReference>
<dbReference type="Pfam" id="PF01765">
    <property type="entry name" value="RRF"/>
    <property type="match status" value="1"/>
</dbReference>
<dbReference type="SUPFAM" id="SSF55194">
    <property type="entry name" value="Ribosome recycling factor, RRF"/>
    <property type="match status" value="1"/>
</dbReference>
<accession>Q46GQ5</accession>
<evidence type="ECO:0000255" key="1">
    <source>
        <dbReference type="HAMAP-Rule" id="MF_00040"/>
    </source>
</evidence>
<evidence type="ECO:0000256" key="2">
    <source>
        <dbReference type="SAM" id="MobiDB-lite"/>
    </source>
</evidence>
<comment type="function">
    <text evidence="1">Responsible for the release of ribosomes from messenger RNA at the termination of protein biosynthesis. May increase the efficiency of translation by recycling ribosomes from one round of translation to another.</text>
</comment>
<comment type="subcellular location">
    <subcellularLocation>
        <location evidence="1">Cytoplasm</location>
    </subcellularLocation>
</comment>
<comment type="similarity">
    <text evidence="1">Belongs to the RRF family.</text>
</comment>
<organism>
    <name type="scientific">Prochlorococcus marinus (strain NATL2A)</name>
    <dbReference type="NCBI Taxonomy" id="59920"/>
    <lineage>
        <taxon>Bacteria</taxon>
        <taxon>Bacillati</taxon>
        <taxon>Cyanobacteriota</taxon>
        <taxon>Cyanophyceae</taxon>
        <taxon>Synechococcales</taxon>
        <taxon>Prochlorococcaceae</taxon>
        <taxon>Prochlorococcus</taxon>
    </lineage>
</organism>
<reference key="1">
    <citation type="journal article" date="2007" name="PLoS Genet.">
        <title>Patterns and implications of gene gain and loss in the evolution of Prochlorococcus.</title>
        <authorList>
            <person name="Kettler G.C."/>
            <person name="Martiny A.C."/>
            <person name="Huang K."/>
            <person name="Zucker J."/>
            <person name="Coleman M.L."/>
            <person name="Rodrigue S."/>
            <person name="Chen F."/>
            <person name="Lapidus A."/>
            <person name="Ferriera S."/>
            <person name="Johnson J."/>
            <person name="Steglich C."/>
            <person name="Church G.M."/>
            <person name="Richardson P."/>
            <person name="Chisholm S.W."/>
        </authorList>
    </citation>
    <scope>NUCLEOTIDE SEQUENCE [LARGE SCALE GENOMIC DNA]</scope>
    <source>
        <strain>NATL2A</strain>
    </source>
</reference>
<gene>
    <name evidence="1" type="primary">frr</name>
    <name type="ordered locus">PMN2A_1853</name>
</gene>